<feature type="chain" id="PRO_0000394689" description="Cytotoxin 8" evidence="4">
    <location>
        <begin position="1"/>
        <end position="60"/>
    </location>
</feature>
<feature type="disulfide bond" evidence="2">
    <location>
        <begin position="3"/>
        <end position="21"/>
    </location>
</feature>
<feature type="disulfide bond" evidence="2">
    <location>
        <begin position="14"/>
        <end position="38"/>
    </location>
</feature>
<feature type="disulfide bond" evidence="2">
    <location>
        <begin position="42"/>
        <end position="53"/>
    </location>
</feature>
<feature type="disulfide bond" evidence="2">
    <location>
        <begin position="54"/>
        <end position="59"/>
    </location>
</feature>
<comment type="function">
    <text evidence="1 2 4">Shows cytolytic activity on many different cells by forming pore in lipid membranes. In vivo, increases heart rate or kills the animal by cardiac arrest. In addition, it binds to heparin with high affinity, interacts with Kv channel-interacting protein 1 (KCNIP1) in a calcium-independent manner, and binds to integrin alpha-V/beta-3 (ITGAV/ITGB3) with moderate affinity (By similarity). Has hemolytic activity towards human erythrocytes (EC(50)=0.074 uM) and cytolytic activity towards various cell lines (PubMed:26456928).</text>
</comment>
<comment type="subunit">
    <text evidence="1">Monomer in solution; Homodimer and oligomer in the presence of negatively charged lipids forming a pore with a size ranging between 20 and 30 Angstroms.</text>
</comment>
<comment type="subcellular location">
    <subcellularLocation>
        <location evidence="3 4">Secreted</location>
    </subcellularLocation>
    <subcellularLocation>
        <location evidence="1">Target cell membrane</location>
    </subcellularLocation>
</comment>
<comment type="tissue specificity">
    <text evidence="7">Expressed by the venom gland.</text>
</comment>
<comment type="miscellaneous">
    <text evidence="7">Is classified as a S-type cytotoxin, since a serine residue stands at position 28 (Ser-29 in standard classification).</text>
</comment>
<comment type="similarity">
    <text evidence="7">Belongs to the three-finger toxin family. Short-chain subfamily. Type IA cytotoxin sub-subfamily.</text>
</comment>
<evidence type="ECO:0000250" key="1">
    <source>
        <dbReference type="UniProtKB" id="P60301"/>
    </source>
</evidence>
<evidence type="ECO:0000250" key="2">
    <source>
        <dbReference type="UniProtKB" id="P60304"/>
    </source>
</evidence>
<evidence type="ECO:0000269" key="3">
    <source>
    </source>
</evidence>
<evidence type="ECO:0000269" key="4">
    <source>
    </source>
</evidence>
<evidence type="ECO:0000303" key="5">
    <source>
    </source>
</evidence>
<evidence type="ECO:0000303" key="6">
    <source>
    </source>
</evidence>
<evidence type="ECO:0000305" key="7"/>
<reference key="1">
    <citation type="journal article" date="2016" name="Comp. Biochem. Physiol.">
        <title>Comparison of the primary structures, cytotoxicities, and affinities to phospholipids of five kinds of cytotoxins from the venom of Indian cobra, Naja naja.</title>
        <authorList>
            <person name="Suzuki-Matsubara M."/>
            <person name="Athauda S.B.P."/>
            <person name="Suzuki Y."/>
            <person name="Matsubara R.A.K."/>
            <person name="Moriyama A."/>
        </authorList>
    </citation>
    <scope>PROTEIN SEQUENCE</scope>
    <scope>FUNCTION</scope>
    <scope>SUBCELLULAR LOCATION</scope>
    <source>
        <tissue evidence="6">Venom</tissue>
    </source>
</reference>
<reference key="2">
    <citation type="journal article" date="2010" name="Biomed. Res.">
        <title>Molecular diversity in venom proteins of the Russell's viper (Daboia russellii russellii) and the Indian cobra (Naja naja) in Sri Lanka.</title>
        <authorList>
            <person name="Suzuki M."/>
            <person name="Itoh T."/>
            <person name="Bandaranayake B.M.A.I.K."/>
            <person name="Ranasinghe J.G."/>
            <person name="Athauda S.B."/>
            <person name="Moriyama A."/>
        </authorList>
    </citation>
    <scope>PROTEIN SEQUENCE OF 1-30</scope>
    <scope>SUBCELLULAR LOCATION</scope>
    <source>
        <tissue evidence="5">Venom</tissue>
    </source>
</reference>
<proteinExistence type="evidence at protein level"/>
<organism evidence="5">
    <name type="scientific">Naja naja</name>
    <name type="common">Indian cobra</name>
    <dbReference type="NCBI Taxonomy" id="35670"/>
    <lineage>
        <taxon>Eukaryota</taxon>
        <taxon>Metazoa</taxon>
        <taxon>Chordata</taxon>
        <taxon>Craniata</taxon>
        <taxon>Vertebrata</taxon>
        <taxon>Euteleostomi</taxon>
        <taxon>Lepidosauria</taxon>
        <taxon>Squamata</taxon>
        <taxon>Bifurcata</taxon>
        <taxon>Unidentata</taxon>
        <taxon>Episquamata</taxon>
        <taxon>Toxicofera</taxon>
        <taxon>Serpentes</taxon>
        <taxon>Colubroidea</taxon>
        <taxon>Elapidae</taxon>
        <taxon>Elapinae</taxon>
        <taxon>Naja</taxon>
    </lineage>
</organism>
<dbReference type="SMR" id="P86540"/>
<dbReference type="Proteomes" id="UP000694559">
    <property type="component" value="Unplaced"/>
</dbReference>
<dbReference type="GO" id="GO:0005576">
    <property type="term" value="C:extracellular region"/>
    <property type="evidence" value="ECO:0007669"/>
    <property type="project" value="UniProtKB-SubCell"/>
</dbReference>
<dbReference type="GO" id="GO:0016020">
    <property type="term" value="C:membrane"/>
    <property type="evidence" value="ECO:0007669"/>
    <property type="project" value="UniProtKB-KW"/>
</dbReference>
<dbReference type="GO" id="GO:0044218">
    <property type="term" value="C:other organism cell membrane"/>
    <property type="evidence" value="ECO:0007669"/>
    <property type="project" value="UniProtKB-KW"/>
</dbReference>
<dbReference type="GO" id="GO:0090729">
    <property type="term" value="F:toxin activity"/>
    <property type="evidence" value="ECO:0007669"/>
    <property type="project" value="UniProtKB-KW"/>
</dbReference>
<dbReference type="GO" id="GO:0031640">
    <property type="term" value="P:killing of cells of another organism"/>
    <property type="evidence" value="ECO:0007669"/>
    <property type="project" value="UniProtKB-KW"/>
</dbReference>
<dbReference type="CDD" id="cd00206">
    <property type="entry name" value="TFP_snake_toxin"/>
    <property type="match status" value="1"/>
</dbReference>
<dbReference type="FunFam" id="2.10.60.10:FF:000024">
    <property type="entry name" value="Cytotoxin 1"/>
    <property type="match status" value="1"/>
</dbReference>
<dbReference type="Gene3D" id="2.10.60.10">
    <property type="entry name" value="CD59"/>
    <property type="match status" value="1"/>
</dbReference>
<dbReference type="InterPro" id="IPR003572">
    <property type="entry name" value="Cytotoxin_Cobra"/>
</dbReference>
<dbReference type="InterPro" id="IPR003571">
    <property type="entry name" value="Snake_3FTx"/>
</dbReference>
<dbReference type="InterPro" id="IPR045860">
    <property type="entry name" value="Snake_toxin-like_sf"/>
</dbReference>
<dbReference type="InterPro" id="IPR018354">
    <property type="entry name" value="Snake_toxin_con_site"/>
</dbReference>
<dbReference type="InterPro" id="IPR054131">
    <property type="entry name" value="Toxin_cobra-type"/>
</dbReference>
<dbReference type="Pfam" id="PF21947">
    <property type="entry name" value="Toxin_cobra-type"/>
    <property type="match status" value="1"/>
</dbReference>
<dbReference type="PRINTS" id="PR00282">
    <property type="entry name" value="CYTOTOXIN"/>
</dbReference>
<dbReference type="SUPFAM" id="SSF57302">
    <property type="entry name" value="Snake toxin-like"/>
    <property type="match status" value="1"/>
</dbReference>
<dbReference type="PROSITE" id="PS00272">
    <property type="entry name" value="SNAKE_TOXIN"/>
    <property type="match status" value="1"/>
</dbReference>
<name>3SA8_NAJNA</name>
<keyword id="KW-0123">Cardiotoxin</keyword>
<keyword id="KW-0204">Cytolysis</keyword>
<keyword id="KW-0903">Direct protein sequencing</keyword>
<keyword id="KW-1015">Disulfide bond</keyword>
<keyword id="KW-0472">Membrane</keyword>
<keyword id="KW-1185">Reference proteome</keyword>
<keyword id="KW-0964">Secreted</keyword>
<keyword id="KW-1052">Target cell membrane</keyword>
<keyword id="KW-1053">Target membrane</keyword>
<keyword id="KW-0800">Toxin</keyword>
<accession>P86540</accession>
<protein>
    <recommendedName>
        <fullName evidence="5">Cytotoxin 8</fullName>
        <shortName evidence="5">CTX8</shortName>
    </recommendedName>
</protein>
<sequence>LKCNKLIPLAYKTCPAGKDLCYKMYMVSDKTVPVKRGCIDVCPKNSLLVKYECCNTDRCN</sequence>